<protein>
    <recommendedName>
        <fullName evidence="1">tRNA-2-methylthio-N(6)-dimethylallyladenosine synthase</fullName>
        <ecNumber evidence="1">2.8.4.3</ecNumber>
    </recommendedName>
    <alternativeName>
        <fullName evidence="1">(Dimethylallyl)adenosine tRNA methylthiotransferase MiaB</fullName>
    </alternativeName>
    <alternativeName>
        <fullName evidence="1">tRNA-i(6)A37 methylthiotransferase</fullName>
    </alternativeName>
</protein>
<sequence>MTKKLHIKTWGCQMNEYDSSKMADLLNATHGYELTELAEEADVLLLNTCSIREKAQEKVFHLLGRWKLLKKKNPDLIIGVGGCVASQEGKLIRTRSPYVDIVFGPQTLHRLPEMINSVRGDRSPVVDVSFPEIEKFDRLPEPRADGPSAFVSIMEGCNKYCTYCVVPYTRGEEVSRPCDDILFEVAQLAAQGVREVNLLGQNVNAWRGENYDGSIGTFAELLRLVAAIDGIDRVRFTTSHPIEFTDDIIDVYRDTPELVSFLHLPVQCGSDRVLNLMGRTHTVLEYKAIIRKLREARPDIQISSDFIVGFPGETTDDFERTMKLIGEINFDVSFSFIFSARPGTPAADMVDDVPEEEKKQRLYILQERINQQVTAWSRRMLGTTQRILVEGTSRKSVMQLSGRTENNRVVNFEGTPDMIGKFVDIEILEVLTNSMRGKVVRTEDQMGLRVAETPASVIARTRKENDSGAVVYQP</sequence>
<comment type="function">
    <text evidence="1">Catalyzes the methylthiolation of N6-(dimethylallyl)adenosine (i(6)A), leading to the formation of 2-methylthio-N6-(dimethylallyl)adenosine (ms(2)i(6)A) at position 37 in tRNAs that read codons beginning with uridine.</text>
</comment>
<comment type="catalytic activity">
    <reaction evidence="1">
        <text>N(6)-dimethylallyladenosine(37) in tRNA + (sulfur carrier)-SH + AH2 + 2 S-adenosyl-L-methionine = 2-methylsulfanyl-N(6)-dimethylallyladenosine(37) in tRNA + (sulfur carrier)-H + 5'-deoxyadenosine + L-methionine + A + S-adenosyl-L-homocysteine + 2 H(+)</text>
        <dbReference type="Rhea" id="RHEA:37067"/>
        <dbReference type="Rhea" id="RHEA-COMP:10375"/>
        <dbReference type="Rhea" id="RHEA-COMP:10376"/>
        <dbReference type="Rhea" id="RHEA-COMP:14737"/>
        <dbReference type="Rhea" id="RHEA-COMP:14739"/>
        <dbReference type="ChEBI" id="CHEBI:13193"/>
        <dbReference type="ChEBI" id="CHEBI:15378"/>
        <dbReference type="ChEBI" id="CHEBI:17319"/>
        <dbReference type="ChEBI" id="CHEBI:17499"/>
        <dbReference type="ChEBI" id="CHEBI:29917"/>
        <dbReference type="ChEBI" id="CHEBI:57844"/>
        <dbReference type="ChEBI" id="CHEBI:57856"/>
        <dbReference type="ChEBI" id="CHEBI:59789"/>
        <dbReference type="ChEBI" id="CHEBI:64428"/>
        <dbReference type="ChEBI" id="CHEBI:74415"/>
        <dbReference type="ChEBI" id="CHEBI:74417"/>
        <dbReference type="EC" id="2.8.4.3"/>
    </reaction>
</comment>
<comment type="cofactor">
    <cofactor evidence="1">
        <name>[4Fe-4S] cluster</name>
        <dbReference type="ChEBI" id="CHEBI:49883"/>
    </cofactor>
    <text evidence="1">Binds 2 [4Fe-4S] clusters. One cluster is coordinated with 3 cysteines and an exchangeable S-adenosyl-L-methionine.</text>
</comment>
<comment type="subunit">
    <text evidence="1">Monomer.</text>
</comment>
<comment type="subcellular location">
    <subcellularLocation>
        <location evidence="1">Cytoplasm</location>
    </subcellularLocation>
</comment>
<comment type="similarity">
    <text evidence="1">Belongs to the methylthiotransferase family. MiaB subfamily.</text>
</comment>
<keyword id="KW-0004">4Fe-4S</keyword>
<keyword id="KW-0963">Cytoplasm</keyword>
<keyword id="KW-0408">Iron</keyword>
<keyword id="KW-0411">Iron-sulfur</keyword>
<keyword id="KW-0479">Metal-binding</keyword>
<keyword id="KW-0949">S-adenosyl-L-methionine</keyword>
<keyword id="KW-0808">Transferase</keyword>
<keyword id="KW-0819">tRNA processing</keyword>
<feature type="chain" id="PRO_0000374277" description="tRNA-2-methylthio-N(6)-dimethylallyladenosine synthase">
    <location>
        <begin position="1"/>
        <end position="474"/>
    </location>
</feature>
<feature type="domain" description="MTTase N-terminal" evidence="1">
    <location>
        <begin position="3"/>
        <end position="120"/>
    </location>
</feature>
<feature type="domain" description="Radical SAM core" evidence="2">
    <location>
        <begin position="143"/>
        <end position="378"/>
    </location>
</feature>
<feature type="domain" description="TRAM" evidence="1">
    <location>
        <begin position="378"/>
        <end position="441"/>
    </location>
</feature>
<feature type="binding site" evidence="1">
    <location>
        <position position="12"/>
    </location>
    <ligand>
        <name>[4Fe-4S] cluster</name>
        <dbReference type="ChEBI" id="CHEBI:49883"/>
        <label>1</label>
    </ligand>
</feature>
<feature type="binding site" evidence="1">
    <location>
        <position position="49"/>
    </location>
    <ligand>
        <name>[4Fe-4S] cluster</name>
        <dbReference type="ChEBI" id="CHEBI:49883"/>
        <label>1</label>
    </ligand>
</feature>
<feature type="binding site" evidence="1">
    <location>
        <position position="83"/>
    </location>
    <ligand>
        <name>[4Fe-4S] cluster</name>
        <dbReference type="ChEBI" id="CHEBI:49883"/>
        <label>1</label>
    </ligand>
</feature>
<feature type="binding site" evidence="1">
    <location>
        <position position="157"/>
    </location>
    <ligand>
        <name>[4Fe-4S] cluster</name>
        <dbReference type="ChEBI" id="CHEBI:49883"/>
        <label>2</label>
        <note>4Fe-4S-S-AdoMet</note>
    </ligand>
</feature>
<feature type="binding site" evidence="1">
    <location>
        <position position="161"/>
    </location>
    <ligand>
        <name>[4Fe-4S] cluster</name>
        <dbReference type="ChEBI" id="CHEBI:49883"/>
        <label>2</label>
        <note>4Fe-4S-S-AdoMet</note>
    </ligand>
</feature>
<feature type="binding site" evidence="1">
    <location>
        <position position="164"/>
    </location>
    <ligand>
        <name>[4Fe-4S] cluster</name>
        <dbReference type="ChEBI" id="CHEBI:49883"/>
        <label>2</label>
        <note>4Fe-4S-S-AdoMet</note>
    </ligand>
</feature>
<dbReference type="EC" id="2.8.4.3" evidence="1"/>
<dbReference type="EMBL" id="CP000653">
    <property type="protein sequence ID" value="ABP59868.1"/>
    <property type="molecule type" value="Genomic_DNA"/>
</dbReference>
<dbReference type="RefSeq" id="WP_012016587.1">
    <property type="nucleotide sequence ID" value="NC_009436.1"/>
</dbReference>
<dbReference type="SMR" id="A4W838"/>
<dbReference type="STRING" id="399742.Ent638_1187"/>
<dbReference type="KEGG" id="ent:Ent638_1187"/>
<dbReference type="eggNOG" id="COG0621">
    <property type="taxonomic scope" value="Bacteria"/>
</dbReference>
<dbReference type="HOGENOM" id="CLU_018697_2_0_6"/>
<dbReference type="OrthoDB" id="9805215at2"/>
<dbReference type="Proteomes" id="UP000000230">
    <property type="component" value="Chromosome"/>
</dbReference>
<dbReference type="GO" id="GO:0005829">
    <property type="term" value="C:cytosol"/>
    <property type="evidence" value="ECO:0007669"/>
    <property type="project" value="TreeGrafter"/>
</dbReference>
<dbReference type="GO" id="GO:0051539">
    <property type="term" value="F:4 iron, 4 sulfur cluster binding"/>
    <property type="evidence" value="ECO:0007669"/>
    <property type="project" value="UniProtKB-UniRule"/>
</dbReference>
<dbReference type="GO" id="GO:0046872">
    <property type="term" value="F:metal ion binding"/>
    <property type="evidence" value="ECO:0007669"/>
    <property type="project" value="UniProtKB-KW"/>
</dbReference>
<dbReference type="GO" id="GO:0035597">
    <property type="term" value="F:N6-isopentenyladenosine methylthiotransferase activity"/>
    <property type="evidence" value="ECO:0007669"/>
    <property type="project" value="TreeGrafter"/>
</dbReference>
<dbReference type="CDD" id="cd01335">
    <property type="entry name" value="Radical_SAM"/>
    <property type="match status" value="1"/>
</dbReference>
<dbReference type="FunFam" id="3.40.50.12160:FF:000001">
    <property type="entry name" value="tRNA-2-methylthio-N(6)-dimethylallyladenosine synthase"/>
    <property type="match status" value="1"/>
</dbReference>
<dbReference type="FunFam" id="3.80.30.20:FF:000001">
    <property type="entry name" value="tRNA-2-methylthio-N(6)-dimethylallyladenosine synthase 2"/>
    <property type="match status" value="1"/>
</dbReference>
<dbReference type="Gene3D" id="3.40.50.12160">
    <property type="entry name" value="Methylthiotransferase, N-terminal domain"/>
    <property type="match status" value="1"/>
</dbReference>
<dbReference type="Gene3D" id="3.80.30.20">
    <property type="entry name" value="tm_1862 like domain"/>
    <property type="match status" value="1"/>
</dbReference>
<dbReference type="HAMAP" id="MF_01864">
    <property type="entry name" value="tRNA_metthiotr_MiaB"/>
    <property type="match status" value="1"/>
</dbReference>
<dbReference type="InterPro" id="IPR006638">
    <property type="entry name" value="Elp3/MiaA/NifB-like_rSAM"/>
</dbReference>
<dbReference type="InterPro" id="IPR005839">
    <property type="entry name" value="Methylthiotransferase"/>
</dbReference>
<dbReference type="InterPro" id="IPR020612">
    <property type="entry name" value="Methylthiotransferase_CS"/>
</dbReference>
<dbReference type="InterPro" id="IPR013848">
    <property type="entry name" value="Methylthiotransferase_N"/>
</dbReference>
<dbReference type="InterPro" id="IPR038135">
    <property type="entry name" value="Methylthiotransferase_N_sf"/>
</dbReference>
<dbReference type="InterPro" id="IPR006463">
    <property type="entry name" value="MiaB_methiolase"/>
</dbReference>
<dbReference type="InterPro" id="IPR007197">
    <property type="entry name" value="rSAM"/>
</dbReference>
<dbReference type="InterPro" id="IPR023404">
    <property type="entry name" value="rSAM_horseshoe"/>
</dbReference>
<dbReference type="InterPro" id="IPR002792">
    <property type="entry name" value="TRAM_dom"/>
</dbReference>
<dbReference type="NCBIfam" id="TIGR01574">
    <property type="entry name" value="miaB-methiolase"/>
    <property type="match status" value="1"/>
</dbReference>
<dbReference type="NCBIfam" id="TIGR00089">
    <property type="entry name" value="MiaB/RimO family radical SAM methylthiotransferase"/>
    <property type="match status" value="1"/>
</dbReference>
<dbReference type="PANTHER" id="PTHR43020">
    <property type="entry name" value="CDK5 REGULATORY SUBUNIT-ASSOCIATED PROTEIN 1"/>
    <property type="match status" value="1"/>
</dbReference>
<dbReference type="PANTHER" id="PTHR43020:SF2">
    <property type="entry name" value="MITOCHONDRIAL TRNA METHYLTHIOTRANSFERASE CDK5RAP1"/>
    <property type="match status" value="1"/>
</dbReference>
<dbReference type="Pfam" id="PF04055">
    <property type="entry name" value="Radical_SAM"/>
    <property type="match status" value="1"/>
</dbReference>
<dbReference type="Pfam" id="PF01938">
    <property type="entry name" value="TRAM"/>
    <property type="match status" value="1"/>
</dbReference>
<dbReference type="Pfam" id="PF00919">
    <property type="entry name" value="UPF0004"/>
    <property type="match status" value="1"/>
</dbReference>
<dbReference type="SFLD" id="SFLDF00273">
    <property type="entry name" value="(dimethylallyl)adenosine_tRNA"/>
    <property type="match status" value="1"/>
</dbReference>
<dbReference type="SFLD" id="SFLDG01082">
    <property type="entry name" value="B12-binding_domain_containing"/>
    <property type="match status" value="1"/>
</dbReference>
<dbReference type="SFLD" id="SFLDS00029">
    <property type="entry name" value="Radical_SAM"/>
    <property type="match status" value="1"/>
</dbReference>
<dbReference type="SMART" id="SM00729">
    <property type="entry name" value="Elp3"/>
    <property type="match status" value="1"/>
</dbReference>
<dbReference type="SUPFAM" id="SSF102114">
    <property type="entry name" value="Radical SAM enzymes"/>
    <property type="match status" value="1"/>
</dbReference>
<dbReference type="PROSITE" id="PS51449">
    <property type="entry name" value="MTTASE_N"/>
    <property type="match status" value="1"/>
</dbReference>
<dbReference type="PROSITE" id="PS01278">
    <property type="entry name" value="MTTASE_RADICAL"/>
    <property type="match status" value="1"/>
</dbReference>
<dbReference type="PROSITE" id="PS51918">
    <property type="entry name" value="RADICAL_SAM"/>
    <property type="match status" value="1"/>
</dbReference>
<dbReference type="PROSITE" id="PS50926">
    <property type="entry name" value="TRAM"/>
    <property type="match status" value="1"/>
</dbReference>
<organism>
    <name type="scientific">Enterobacter sp. (strain 638)</name>
    <dbReference type="NCBI Taxonomy" id="399742"/>
    <lineage>
        <taxon>Bacteria</taxon>
        <taxon>Pseudomonadati</taxon>
        <taxon>Pseudomonadota</taxon>
        <taxon>Gammaproteobacteria</taxon>
        <taxon>Enterobacterales</taxon>
        <taxon>Enterobacteriaceae</taxon>
        <taxon>Enterobacter</taxon>
    </lineage>
</organism>
<name>MIAB_ENT38</name>
<accession>A4W838</accession>
<gene>
    <name evidence="1" type="primary">miaB</name>
    <name type="ordered locus">Ent638_1187</name>
</gene>
<evidence type="ECO:0000255" key="1">
    <source>
        <dbReference type="HAMAP-Rule" id="MF_01864"/>
    </source>
</evidence>
<evidence type="ECO:0000255" key="2">
    <source>
        <dbReference type="PROSITE-ProRule" id="PRU01266"/>
    </source>
</evidence>
<proteinExistence type="inferred from homology"/>
<reference key="1">
    <citation type="journal article" date="2010" name="PLoS Genet.">
        <title>Genome sequence of the plant growth promoting endophytic bacterium Enterobacter sp. 638.</title>
        <authorList>
            <person name="Taghavi S."/>
            <person name="van der Lelie D."/>
            <person name="Hoffman A."/>
            <person name="Zhang Y.B."/>
            <person name="Walla M.D."/>
            <person name="Vangronsveld J."/>
            <person name="Newman L."/>
            <person name="Monchy S."/>
        </authorList>
    </citation>
    <scope>NUCLEOTIDE SEQUENCE [LARGE SCALE GENOMIC DNA]</scope>
    <source>
        <strain>638</strain>
    </source>
</reference>